<evidence type="ECO:0000255" key="1">
    <source>
        <dbReference type="HAMAP-Rule" id="MF_00507"/>
    </source>
</evidence>
<gene>
    <name type="ordered locus">VCM66_A0528</name>
</gene>
<proteinExistence type="inferred from homology"/>
<name>Y3328_VIBCM</name>
<protein>
    <recommendedName>
        <fullName evidence="1">UPF0181 protein VCM66_A0528</fullName>
    </recommendedName>
</protein>
<organism>
    <name type="scientific">Vibrio cholerae serotype O1 (strain M66-2)</name>
    <dbReference type="NCBI Taxonomy" id="579112"/>
    <lineage>
        <taxon>Bacteria</taxon>
        <taxon>Pseudomonadati</taxon>
        <taxon>Pseudomonadota</taxon>
        <taxon>Gammaproteobacteria</taxon>
        <taxon>Vibrionales</taxon>
        <taxon>Vibrionaceae</taxon>
        <taxon>Vibrio</taxon>
    </lineage>
</organism>
<feature type="chain" id="PRO_1000197850" description="UPF0181 protein VCM66_A0528">
    <location>
        <begin position="1"/>
        <end position="53"/>
    </location>
</feature>
<accession>C3LVI5</accession>
<dbReference type="EMBL" id="CP001234">
    <property type="protein sequence ID" value="ACP07490.1"/>
    <property type="molecule type" value="Genomic_DNA"/>
</dbReference>
<dbReference type="RefSeq" id="WP_000459082.1">
    <property type="nucleotide sequence ID" value="NC_012580.1"/>
</dbReference>
<dbReference type="SMR" id="C3LVI5"/>
<dbReference type="KEGG" id="vcm:VCM66_A0528"/>
<dbReference type="HOGENOM" id="CLU_185263_1_0_6"/>
<dbReference type="Proteomes" id="UP000001217">
    <property type="component" value="Chromosome II"/>
</dbReference>
<dbReference type="HAMAP" id="MF_00507">
    <property type="entry name" value="UPF0181"/>
    <property type="match status" value="1"/>
</dbReference>
<dbReference type="InterPro" id="IPR005371">
    <property type="entry name" value="UPF0181"/>
</dbReference>
<dbReference type="NCBIfam" id="NF003476">
    <property type="entry name" value="PRK05114.1"/>
    <property type="match status" value="1"/>
</dbReference>
<dbReference type="Pfam" id="PF03701">
    <property type="entry name" value="UPF0181"/>
    <property type="match status" value="1"/>
</dbReference>
<reference key="1">
    <citation type="journal article" date="2008" name="PLoS ONE">
        <title>A recalibrated molecular clock and independent origins for the cholera pandemic clones.</title>
        <authorList>
            <person name="Feng L."/>
            <person name="Reeves P.R."/>
            <person name="Lan R."/>
            <person name="Ren Y."/>
            <person name="Gao C."/>
            <person name="Zhou Z."/>
            <person name="Ren Y."/>
            <person name="Cheng J."/>
            <person name="Wang W."/>
            <person name="Wang J."/>
            <person name="Qian W."/>
            <person name="Li D."/>
            <person name="Wang L."/>
        </authorList>
    </citation>
    <scope>NUCLEOTIDE SEQUENCE [LARGE SCALE GENOMIC DNA]</scope>
    <source>
        <strain>M66-2</strain>
    </source>
</reference>
<sequence>MFDDLPTLTHAEQQVAVEKIQKLMAEGISTGEAIKIVAQQIREDKKAQNQGTH</sequence>
<comment type="similarity">
    <text evidence="1">Belongs to the UPF0181 family.</text>
</comment>